<sequence>MTAASSSAPTLGIIRLEHAKGLDLPAYETAGSAGMDLRAAVAEDRQIVLLPGRRTLVPTGLILEIPQGYEVQIRPRSGLAFKNGITCLNTPGTIDSDYRGEVKVLLINLGDDDFRIERGMRIAQAVFAPVIQPKIEERAKISETARGAGGFGSTGTA</sequence>
<comment type="function">
    <text evidence="1">This enzyme is involved in nucleotide metabolism: it produces dUMP, the immediate precursor of thymidine nucleotides and it decreases the intracellular concentration of dUTP so that uracil cannot be incorporated into DNA.</text>
</comment>
<comment type="catalytic activity">
    <reaction evidence="1">
        <text>dUTP + H2O = dUMP + diphosphate + H(+)</text>
        <dbReference type="Rhea" id="RHEA:10248"/>
        <dbReference type="ChEBI" id="CHEBI:15377"/>
        <dbReference type="ChEBI" id="CHEBI:15378"/>
        <dbReference type="ChEBI" id="CHEBI:33019"/>
        <dbReference type="ChEBI" id="CHEBI:61555"/>
        <dbReference type="ChEBI" id="CHEBI:246422"/>
        <dbReference type="EC" id="3.6.1.23"/>
    </reaction>
</comment>
<comment type="cofactor">
    <cofactor evidence="1">
        <name>Mg(2+)</name>
        <dbReference type="ChEBI" id="CHEBI:18420"/>
    </cofactor>
</comment>
<comment type="pathway">
    <text evidence="1">Pyrimidine metabolism; dUMP biosynthesis; dUMP from dCTP (dUTP route): step 2/2.</text>
</comment>
<comment type="similarity">
    <text evidence="1">Belongs to the dUTPase family.</text>
</comment>
<comment type="sequence caution" evidence="2">
    <conflict type="erroneous initiation">
        <sequence resource="EMBL-CDS" id="AAL51539"/>
    </conflict>
</comment>
<protein>
    <recommendedName>
        <fullName evidence="1">Deoxyuridine 5'-triphosphate nucleotidohydrolase</fullName>
        <shortName evidence="1">dUTPase</shortName>
        <ecNumber evidence="1">3.6.1.23</ecNumber>
    </recommendedName>
    <alternativeName>
        <fullName evidence="1">dUTP pyrophosphatase</fullName>
    </alternativeName>
</protein>
<reference key="1">
    <citation type="journal article" date="2002" name="Proc. Natl. Acad. Sci. U.S.A.">
        <title>The genome sequence of the facultative intracellular pathogen Brucella melitensis.</title>
        <authorList>
            <person name="DelVecchio V.G."/>
            <person name="Kapatral V."/>
            <person name="Redkar R.J."/>
            <person name="Patra G."/>
            <person name="Mujer C."/>
            <person name="Los T."/>
            <person name="Ivanova N."/>
            <person name="Anderson I."/>
            <person name="Bhattacharyya A."/>
            <person name="Lykidis A."/>
            <person name="Reznik G."/>
            <person name="Jablonski L."/>
            <person name="Larsen N."/>
            <person name="D'Souza M."/>
            <person name="Bernal A."/>
            <person name="Mazur M."/>
            <person name="Goltsman E."/>
            <person name="Selkov E."/>
            <person name="Elzer P.H."/>
            <person name="Hagius S."/>
            <person name="O'Callaghan D."/>
            <person name="Letesson J.-J."/>
            <person name="Haselkorn R."/>
            <person name="Kyrpides N.C."/>
            <person name="Overbeek R."/>
        </authorList>
    </citation>
    <scope>NUCLEOTIDE SEQUENCE [LARGE SCALE GENOMIC DNA]</scope>
    <source>
        <strain>ATCC 23456 / CCUG 17765 / NCTC 10094 / 16M</strain>
    </source>
</reference>
<feature type="chain" id="PRO_0000182835" description="Deoxyuridine 5'-triphosphate nucleotidohydrolase">
    <location>
        <begin position="1"/>
        <end position="157"/>
    </location>
</feature>
<feature type="binding site" evidence="1">
    <location>
        <begin position="76"/>
        <end position="78"/>
    </location>
    <ligand>
        <name>substrate</name>
    </ligand>
</feature>
<feature type="binding site" evidence="1">
    <location>
        <position position="89"/>
    </location>
    <ligand>
        <name>substrate</name>
    </ligand>
</feature>
<feature type="binding site" evidence="1">
    <location>
        <begin position="93"/>
        <end position="95"/>
    </location>
    <ligand>
        <name>substrate</name>
    </ligand>
</feature>
<feature type="binding site" evidence="1">
    <location>
        <position position="103"/>
    </location>
    <ligand>
        <name>substrate</name>
    </ligand>
</feature>
<keyword id="KW-0378">Hydrolase</keyword>
<keyword id="KW-0460">Magnesium</keyword>
<keyword id="KW-0479">Metal-binding</keyword>
<keyword id="KW-0546">Nucleotide metabolism</keyword>
<evidence type="ECO:0000255" key="1">
    <source>
        <dbReference type="HAMAP-Rule" id="MF_00116"/>
    </source>
</evidence>
<evidence type="ECO:0000305" key="2"/>
<organism>
    <name type="scientific">Brucella melitensis biotype 1 (strain ATCC 23456 / CCUG 17765 / NCTC 10094 / 16M)</name>
    <dbReference type="NCBI Taxonomy" id="224914"/>
    <lineage>
        <taxon>Bacteria</taxon>
        <taxon>Pseudomonadati</taxon>
        <taxon>Pseudomonadota</taxon>
        <taxon>Alphaproteobacteria</taxon>
        <taxon>Hyphomicrobiales</taxon>
        <taxon>Brucellaceae</taxon>
        <taxon>Brucella/Ochrobactrum group</taxon>
        <taxon>Brucella</taxon>
    </lineage>
</organism>
<accession>P64004</accession>
<accession>Q8YIT4</accession>
<name>DUT_BRUME</name>
<proteinExistence type="inferred from homology"/>
<dbReference type="EC" id="3.6.1.23" evidence="1"/>
<dbReference type="EMBL" id="AE008917">
    <property type="protein sequence ID" value="AAL51539.1"/>
    <property type="status" value="ALT_INIT"/>
    <property type="molecule type" value="Genomic_DNA"/>
</dbReference>
<dbReference type="PIR" id="AH3296">
    <property type="entry name" value="AH3296"/>
</dbReference>
<dbReference type="RefSeq" id="WP_002964766.1">
    <property type="nucleotide sequence ID" value="NZ_GG703781.1"/>
</dbReference>
<dbReference type="SMR" id="P64004"/>
<dbReference type="GeneID" id="97533165"/>
<dbReference type="KEGG" id="bme:BMEI0358"/>
<dbReference type="KEGG" id="bmel:DK63_1076"/>
<dbReference type="PATRIC" id="fig|224914.52.peg.1131"/>
<dbReference type="eggNOG" id="COG0756">
    <property type="taxonomic scope" value="Bacteria"/>
</dbReference>
<dbReference type="PhylomeDB" id="P64004"/>
<dbReference type="UniPathway" id="UPA00610">
    <property type="reaction ID" value="UER00666"/>
</dbReference>
<dbReference type="PRO" id="PR:P64004"/>
<dbReference type="Proteomes" id="UP000000419">
    <property type="component" value="Chromosome I"/>
</dbReference>
<dbReference type="GO" id="GO:0004170">
    <property type="term" value="F:dUTP diphosphatase activity"/>
    <property type="evidence" value="ECO:0007669"/>
    <property type="project" value="UniProtKB-UniRule"/>
</dbReference>
<dbReference type="GO" id="GO:0000287">
    <property type="term" value="F:magnesium ion binding"/>
    <property type="evidence" value="ECO:0007669"/>
    <property type="project" value="UniProtKB-UniRule"/>
</dbReference>
<dbReference type="GO" id="GO:0006226">
    <property type="term" value="P:dUMP biosynthetic process"/>
    <property type="evidence" value="ECO:0007669"/>
    <property type="project" value="UniProtKB-UniRule"/>
</dbReference>
<dbReference type="GO" id="GO:0046081">
    <property type="term" value="P:dUTP catabolic process"/>
    <property type="evidence" value="ECO:0007669"/>
    <property type="project" value="InterPro"/>
</dbReference>
<dbReference type="CDD" id="cd07557">
    <property type="entry name" value="trimeric_dUTPase"/>
    <property type="match status" value="1"/>
</dbReference>
<dbReference type="Gene3D" id="2.70.40.10">
    <property type="match status" value="1"/>
</dbReference>
<dbReference type="HAMAP" id="MF_00116">
    <property type="entry name" value="dUTPase_bact"/>
    <property type="match status" value="1"/>
</dbReference>
<dbReference type="InterPro" id="IPR008181">
    <property type="entry name" value="dUTPase"/>
</dbReference>
<dbReference type="InterPro" id="IPR029054">
    <property type="entry name" value="dUTPase-like"/>
</dbReference>
<dbReference type="InterPro" id="IPR036157">
    <property type="entry name" value="dUTPase-like_sf"/>
</dbReference>
<dbReference type="InterPro" id="IPR033704">
    <property type="entry name" value="dUTPase_trimeric"/>
</dbReference>
<dbReference type="NCBIfam" id="TIGR00576">
    <property type="entry name" value="dut"/>
    <property type="match status" value="1"/>
</dbReference>
<dbReference type="NCBIfam" id="NF001862">
    <property type="entry name" value="PRK00601.1"/>
    <property type="match status" value="1"/>
</dbReference>
<dbReference type="PANTHER" id="PTHR11241">
    <property type="entry name" value="DEOXYURIDINE 5'-TRIPHOSPHATE NUCLEOTIDOHYDROLASE"/>
    <property type="match status" value="1"/>
</dbReference>
<dbReference type="PANTHER" id="PTHR11241:SF0">
    <property type="entry name" value="DEOXYURIDINE 5'-TRIPHOSPHATE NUCLEOTIDOHYDROLASE"/>
    <property type="match status" value="1"/>
</dbReference>
<dbReference type="Pfam" id="PF00692">
    <property type="entry name" value="dUTPase"/>
    <property type="match status" value="1"/>
</dbReference>
<dbReference type="SUPFAM" id="SSF51283">
    <property type="entry name" value="dUTPase-like"/>
    <property type="match status" value="1"/>
</dbReference>
<gene>
    <name evidence="1" type="primary">dut</name>
    <name type="ordered locus">BMEI0358</name>
</gene>